<evidence type="ECO:0000255" key="1">
    <source>
        <dbReference type="HAMAP-Rule" id="MF_01025"/>
    </source>
</evidence>
<reference key="1">
    <citation type="journal article" date="2009" name="PLoS ONE">
        <title>Salmonella paratyphi C: genetic divergence from Salmonella choleraesuis and pathogenic convergence with Salmonella typhi.</title>
        <authorList>
            <person name="Liu W.-Q."/>
            <person name="Feng Y."/>
            <person name="Wang Y."/>
            <person name="Zou Q.-H."/>
            <person name="Chen F."/>
            <person name="Guo J.-T."/>
            <person name="Peng Y.-H."/>
            <person name="Jin Y."/>
            <person name="Li Y.-G."/>
            <person name="Hu S.-N."/>
            <person name="Johnston R.N."/>
            <person name="Liu G.-R."/>
            <person name="Liu S.-L."/>
        </authorList>
    </citation>
    <scope>NUCLEOTIDE SEQUENCE [LARGE SCALE GENOMIC DNA]</scope>
    <source>
        <strain>RKS4594</strain>
    </source>
</reference>
<proteinExistence type="inferred from homology"/>
<organism>
    <name type="scientific">Salmonella paratyphi C (strain RKS4594)</name>
    <dbReference type="NCBI Taxonomy" id="476213"/>
    <lineage>
        <taxon>Bacteria</taxon>
        <taxon>Pseudomonadati</taxon>
        <taxon>Pseudomonadota</taxon>
        <taxon>Gammaproteobacteria</taxon>
        <taxon>Enterobacterales</taxon>
        <taxon>Enterobacteriaceae</taxon>
        <taxon>Salmonella</taxon>
    </lineage>
</organism>
<protein>
    <recommendedName>
        <fullName evidence="1">2-isopropylmalate synthase</fullName>
        <ecNumber evidence="1">2.3.3.13</ecNumber>
    </recommendedName>
    <alternativeName>
        <fullName evidence="1">Alpha-IPM synthase</fullName>
    </alternativeName>
    <alternativeName>
        <fullName evidence="1">Alpha-isopropylmalate synthase</fullName>
    </alternativeName>
</protein>
<keyword id="KW-0028">Amino-acid biosynthesis</keyword>
<keyword id="KW-0100">Branched-chain amino acid biosynthesis</keyword>
<keyword id="KW-0963">Cytoplasm</keyword>
<keyword id="KW-0432">Leucine biosynthesis</keyword>
<keyword id="KW-0464">Manganese</keyword>
<keyword id="KW-0479">Metal-binding</keyword>
<keyword id="KW-0808">Transferase</keyword>
<accession>C0Q5H1</accession>
<feature type="chain" id="PRO_1000149273" description="2-isopropylmalate synthase">
    <location>
        <begin position="1"/>
        <end position="523"/>
    </location>
</feature>
<feature type="domain" description="Pyruvate carboxyltransferase" evidence="1">
    <location>
        <begin position="5"/>
        <end position="267"/>
    </location>
</feature>
<feature type="region of interest" description="Regulatory domain" evidence="1">
    <location>
        <begin position="392"/>
        <end position="523"/>
    </location>
</feature>
<feature type="binding site" evidence="1">
    <location>
        <position position="14"/>
    </location>
    <ligand>
        <name>Mn(2+)</name>
        <dbReference type="ChEBI" id="CHEBI:29035"/>
    </ligand>
</feature>
<feature type="binding site" evidence="1">
    <location>
        <position position="202"/>
    </location>
    <ligand>
        <name>Mn(2+)</name>
        <dbReference type="ChEBI" id="CHEBI:29035"/>
    </ligand>
</feature>
<feature type="binding site" evidence="1">
    <location>
        <position position="204"/>
    </location>
    <ligand>
        <name>Mn(2+)</name>
        <dbReference type="ChEBI" id="CHEBI:29035"/>
    </ligand>
</feature>
<feature type="binding site" evidence="1">
    <location>
        <position position="238"/>
    </location>
    <ligand>
        <name>Mn(2+)</name>
        <dbReference type="ChEBI" id="CHEBI:29035"/>
    </ligand>
</feature>
<dbReference type="EC" id="2.3.3.13" evidence="1"/>
<dbReference type="EMBL" id="CP000857">
    <property type="protein sequence ID" value="ACN44313.1"/>
    <property type="molecule type" value="Genomic_DNA"/>
</dbReference>
<dbReference type="RefSeq" id="WP_000082808.1">
    <property type="nucleotide sequence ID" value="NC_012125.1"/>
</dbReference>
<dbReference type="SMR" id="C0Q5H1"/>
<dbReference type="KEGG" id="sei:SPC_0122"/>
<dbReference type="HOGENOM" id="CLU_022158_0_1_6"/>
<dbReference type="UniPathway" id="UPA00048">
    <property type="reaction ID" value="UER00070"/>
</dbReference>
<dbReference type="Proteomes" id="UP000001599">
    <property type="component" value="Chromosome"/>
</dbReference>
<dbReference type="GO" id="GO:0005829">
    <property type="term" value="C:cytosol"/>
    <property type="evidence" value="ECO:0007669"/>
    <property type="project" value="TreeGrafter"/>
</dbReference>
<dbReference type="GO" id="GO:0003852">
    <property type="term" value="F:2-isopropylmalate synthase activity"/>
    <property type="evidence" value="ECO:0007669"/>
    <property type="project" value="UniProtKB-UniRule"/>
</dbReference>
<dbReference type="GO" id="GO:0003985">
    <property type="term" value="F:acetyl-CoA C-acetyltransferase activity"/>
    <property type="evidence" value="ECO:0007669"/>
    <property type="project" value="UniProtKB-UniRule"/>
</dbReference>
<dbReference type="GO" id="GO:0030145">
    <property type="term" value="F:manganese ion binding"/>
    <property type="evidence" value="ECO:0007669"/>
    <property type="project" value="UniProtKB-UniRule"/>
</dbReference>
<dbReference type="GO" id="GO:0009098">
    <property type="term" value="P:L-leucine biosynthetic process"/>
    <property type="evidence" value="ECO:0007669"/>
    <property type="project" value="UniProtKB-UniRule"/>
</dbReference>
<dbReference type="CDD" id="cd07940">
    <property type="entry name" value="DRE_TIM_IPMS"/>
    <property type="match status" value="1"/>
</dbReference>
<dbReference type="FunFam" id="1.10.238.260:FF:000001">
    <property type="entry name" value="2-isopropylmalate synthase"/>
    <property type="match status" value="1"/>
</dbReference>
<dbReference type="FunFam" id="3.20.20.70:FF:000010">
    <property type="entry name" value="2-isopropylmalate synthase"/>
    <property type="match status" value="1"/>
</dbReference>
<dbReference type="FunFam" id="3.30.160.270:FF:000001">
    <property type="entry name" value="2-isopropylmalate synthase"/>
    <property type="match status" value="1"/>
</dbReference>
<dbReference type="Gene3D" id="1.10.238.260">
    <property type="match status" value="1"/>
</dbReference>
<dbReference type="Gene3D" id="3.30.160.270">
    <property type="match status" value="1"/>
</dbReference>
<dbReference type="Gene3D" id="3.20.20.70">
    <property type="entry name" value="Aldolase class I"/>
    <property type="match status" value="1"/>
</dbReference>
<dbReference type="HAMAP" id="MF_01025">
    <property type="entry name" value="LeuA_type1"/>
    <property type="match status" value="1"/>
</dbReference>
<dbReference type="InterPro" id="IPR050073">
    <property type="entry name" value="2-IPM_HCS-like"/>
</dbReference>
<dbReference type="InterPro" id="IPR013709">
    <property type="entry name" value="2-isopropylmalate_synth_dimer"/>
</dbReference>
<dbReference type="InterPro" id="IPR002034">
    <property type="entry name" value="AIPM/Hcit_synth_CS"/>
</dbReference>
<dbReference type="InterPro" id="IPR013785">
    <property type="entry name" value="Aldolase_TIM"/>
</dbReference>
<dbReference type="InterPro" id="IPR054691">
    <property type="entry name" value="LeuA/HCS_post-cat"/>
</dbReference>
<dbReference type="InterPro" id="IPR036230">
    <property type="entry name" value="LeuA_allosteric_dom_sf"/>
</dbReference>
<dbReference type="InterPro" id="IPR005671">
    <property type="entry name" value="LeuA_bact_synth"/>
</dbReference>
<dbReference type="InterPro" id="IPR000891">
    <property type="entry name" value="PYR_CT"/>
</dbReference>
<dbReference type="NCBIfam" id="TIGR00973">
    <property type="entry name" value="leuA_bact"/>
    <property type="match status" value="1"/>
</dbReference>
<dbReference type="NCBIfam" id="NF002084">
    <property type="entry name" value="PRK00915.1-1"/>
    <property type="match status" value="1"/>
</dbReference>
<dbReference type="NCBIfam" id="NF002086">
    <property type="entry name" value="PRK00915.1-3"/>
    <property type="match status" value="1"/>
</dbReference>
<dbReference type="PANTHER" id="PTHR10277:SF9">
    <property type="entry name" value="2-ISOPROPYLMALATE SYNTHASE 1, CHLOROPLASTIC-RELATED"/>
    <property type="match status" value="1"/>
</dbReference>
<dbReference type="PANTHER" id="PTHR10277">
    <property type="entry name" value="HOMOCITRATE SYNTHASE-RELATED"/>
    <property type="match status" value="1"/>
</dbReference>
<dbReference type="Pfam" id="PF22617">
    <property type="entry name" value="HCS_D2"/>
    <property type="match status" value="1"/>
</dbReference>
<dbReference type="Pfam" id="PF00682">
    <property type="entry name" value="HMGL-like"/>
    <property type="match status" value="1"/>
</dbReference>
<dbReference type="Pfam" id="PF08502">
    <property type="entry name" value="LeuA_dimer"/>
    <property type="match status" value="1"/>
</dbReference>
<dbReference type="SMART" id="SM00917">
    <property type="entry name" value="LeuA_dimer"/>
    <property type="match status" value="1"/>
</dbReference>
<dbReference type="SUPFAM" id="SSF110921">
    <property type="entry name" value="2-isopropylmalate synthase LeuA, allosteric (dimerisation) domain"/>
    <property type="match status" value="1"/>
</dbReference>
<dbReference type="SUPFAM" id="SSF51569">
    <property type="entry name" value="Aldolase"/>
    <property type="match status" value="1"/>
</dbReference>
<dbReference type="PROSITE" id="PS00815">
    <property type="entry name" value="AIPM_HOMOCIT_SYNTH_1"/>
    <property type="match status" value="1"/>
</dbReference>
<dbReference type="PROSITE" id="PS00816">
    <property type="entry name" value="AIPM_HOMOCIT_SYNTH_2"/>
    <property type="match status" value="1"/>
</dbReference>
<dbReference type="PROSITE" id="PS50991">
    <property type="entry name" value="PYR_CT"/>
    <property type="match status" value="1"/>
</dbReference>
<comment type="function">
    <text evidence="1">Catalyzes the condensation of the acetyl group of acetyl-CoA with 3-methyl-2-oxobutanoate (2-ketoisovalerate) to form 3-carboxy-3-hydroxy-4-methylpentanoate (2-isopropylmalate).</text>
</comment>
<comment type="catalytic activity">
    <reaction evidence="1">
        <text>3-methyl-2-oxobutanoate + acetyl-CoA + H2O = (2S)-2-isopropylmalate + CoA + H(+)</text>
        <dbReference type="Rhea" id="RHEA:21524"/>
        <dbReference type="ChEBI" id="CHEBI:1178"/>
        <dbReference type="ChEBI" id="CHEBI:11851"/>
        <dbReference type="ChEBI" id="CHEBI:15377"/>
        <dbReference type="ChEBI" id="CHEBI:15378"/>
        <dbReference type="ChEBI" id="CHEBI:57287"/>
        <dbReference type="ChEBI" id="CHEBI:57288"/>
        <dbReference type="EC" id="2.3.3.13"/>
    </reaction>
</comment>
<comment type="cofactor">
    <cofactor evidence="1">
        <name>Mn(2+)</name>
        <dbReference type="ChEBI" id="CHEBI:29035"/>
    </cofactor>
</comment>
<comment type="pathway">
    <text evidence="1">Amino-acid biosynthesis; L-leucine biosynthesis; L-leucine from 3-methyl-2-oxobutanoate: step 1/4.</text>
</comment>
<comment type="subunit">
    <text evidence="1">Homodimer.</text>
</comment>
<comment type="subcellular location">
    <subcellularLocation>
        <location evidence="1">Cytoplasm</location>
    </subcellularLocation>
</comment>
<comment type="similarity">
    <text evidence="1">Belongs to the alpha-IPM synthase/homocitrate synthase family. LeuA type 1 subfamily.</text>
</comment>
<gene>
    <name evidence="1" type="primary">leuA</name>
    <name type="ordered locus">SPC_0122</name>
</gene>
<sequence length="523" mass="57445">MSQQVIIFDTTLRDGEQALQASLSAKEKLQIALALERMGVDVMEVGFPVSSPGDFESVQTIARTIKNSRVCALARCVEKDIDVAAQALKVADAFRIHTFIATSPMHIATKLRSTLDEVIERAVYMIKRARNYTDDVEFSCEDAGRTPVDDLARVVEAAINAGARTINIPDTVGYTMPFEFAGIISGLYERVPNIDKAIISVHTHDDLGIAVGNSLAAVHAGARQVEGAMNGIGERAGNCALEEVIMAIKVRKDIMNVHTNINHHEIWRTSQTVSQICNMPIPANKAIVGSGAFAHSSGIHQDGVLKNRENYEIMTPESIGLNQIQLNLTSRSGRAAVKHRMEEMGYKDTDYNMDHLYDAFLKLADKKGQVFDYDLEALAFINKQQEEPEHFRLDYFSVQSGSSDIATASVKLACGEEIKAEAANGNGPVDAIYQAINRITGYDVELVKYDLNAKGQGKDALGQVDIVVNHHGRRFHGVGLATDIVESSAKAMVHVLNNIWRAAEVEKELQRKAQNKENNKETV</sequence>
<name>LEU1_SALPC</name>